<sequence>MSEDAVKNAILIAGPTASGKSALAIRMAKATGGFIVNTDSMQVYGVLDLLTARPSRANLAEAEHFLYGHVPPSSTYSTGKWFEDVEALLGRCELQGRVPIFVGGTGLYFRALLGGLSQTPEVSAQVRDHWRGRMEAEGAKALHAVLCVRDPAIAAALQPSDSQRIVRALEVLESTGKSLLEWQKVKGRALVDDQSAQKIVLRPDRAWLGERIARRFSAMWAEGAIDEVRALLALDLDPALPAMKAIGVREVSAFLAETMSREEAIERSVIATRQYAKRQSTWFRNQLGEDWRVYASGEEVFQGGSFRDPQ</sequence>
<name>MIAA_BRUMB</name>
<proteinExistence type="inferred from homology"/>
<keyword id="KW-0067">ATP-binding</keyword>
<keyword id="KW-0460">Magnesium</keyword>
<keyword id="KW-0547">Nucleotide-binding</keyword>
<keyword id="KW-0808">Transferase</keyword>
<keyword id="KW-0819">tRNA processing</keyword>
<dbReference type="EC" id="2.5.1.75" evidence="1"/>
<dbReference type="EMBL" id="CP001488">
    <property type="protein sequence ID" value="ACO01152.1"/>
    <property type="molecule type" value="Genomic_DNA"/>
</dbReference>
<dbReference type="RefSeq" id="WP_004685747.1">
    <property type="nucleotide sequence ID" value="NC_012441.1"/>
</dbReference>
<dbReference type="SMR" id="C0RE30"/>
<dbReference type="KEGG" id="bmi:BMEA_A1437"/>
<dbReference type="HOGENOM" id="CLU_032616_0_1_5"/>
<dbReference type="PRO" id="PR:C0RE30"/>
<dbReference type="Proteomes" id="UP000001748">
    <property type="component" value="Chromosome I"/>
</dbReference>
<dbReference type="GO" id="GO:0005524">
    <property type="term" value="F:ATP binding"/>
    <property type="evidence" value="ECO:0007669"/>
    <property type="project" value="UniProtKB-UniRule"/>
</dbReference>
<dbReference type="GO" id="GO:0052381">
    <property type="term" value="F:tRNA dimethylallyltransferase activity"/>
    <property type="evidence" value="ECO:0007669"/>
    <property type="project" value="UniProtKB-UniRule"/>
</dbReference>
<dbReference type="GO" id="GO:0006400">
    <property type="term" value="P:tRNA modification"/>
    <property type="evidence" value="ECO:0007669"/>
    <property type="project" value="TreeGrafter"/>
</dbReference>
<dbReference type="Gene3D" id="1.10.20.140">
    <property type="match status" value="1"/>
</dbReference>
<dbReference type="Gene3D" id="3.40.50.300">
    <property type="entry name" value="P-loop containing nucleotide triphosphate hydrolases"/>
    <property type="match status" value="1"/>
</dbReference>
<dbReference type="HAMAP" id="MF_00185">
    <property type="entry name" value="IPP_trans"/>
    <property type="match status" value="1"/>
</dbReference>
<dbReference type="InterPro" id="IPR039657">
    <property type="entry name" value="Dimethylallyltransferase"/>
</dbReference>
<dbReference type="InterPro" id="IPR018022">
    <property type="entry name" value="IPT"/>
</dbReference>
<dbReference type="InterPro" id="IPR027417">
    <property type="entry name" value="P-loop_NTPase"/>
</dbReference>
<dbReference type="NCBIfam" id="TIGR00174">
    <property type="entry name" value="miaA"/>
    <property type="match status" value="1"/>
</dbReference>
<dbReference type="PANTHER" id="PTHR11088">
    <property type="entry name" value="TRNA DIMETHYLALLYLTRANSFERASE"/>
    <property type="match status" value="1"/>
</dbReference>
<dbReference type="PANTHER" id="PTHR11088:SF60">
    <property type="entry name" value="TRNA DIMETHYLALLYLTRANSFERASE"/>
    <property type="match status" value="1"/>
</dbReference>
<dbReference type="Pfam" id="PF01715">
    <property type="entry name" value="IPPT"/>
    <property type="match status" value="1"/>
</dbReference>
<dbReference type="SUPFAM" id="SSF52540">
    <property type="entry name" value="P-loop containing nucleoside triphosphate hydrolases"/>
    <property type="match status" value="2"/>
</dbReference>
<comment type="function">
    <text evidence="1">Catalyzes the transfer of a dimethylallyl group onto the adenine at position 37 in tRNAs that read codons beginning with uridine, leading to the formation of N6-(dimethylallyl)adenosine (i(6)A).</text>
</comment>
<comment type="catalytic activity">
    <reaction evidence="1">
        <text>adenosine(37) in tRNA + dimethylallyl diphosphate = N(6)-dimethylallyladenosine(37) in tRNA + diphosphate</text>
        <dbReference type="Rhea" id="RHEA:26482"/>
        <dbReference type="Rhea" id="RHEA-COMP:10162"/>
        <dbReference type="Rhea" id="RHEA-COMP:10375"/>
        <dbReference type="ChEBI" id="CHEBI:33019"/>
        <dbReference type="ChEBI" id="CHEBI:57623"/>
        <dbReference type="ChEBI" id="CHEBI:74411"/>
        <dbReference type="ChEBI" id="CHEBI:74415"/>
        <dbReference type="EC" id="2.5.1.75"/>
    </reaction>
</comment>
<comment type="cofactor">
    <cofactor evidence="1">
        <name>Mg(2+)</name>
        <dbReference type="ChEBI" id="CHEBI:18420"/>
    </cofactor>
</comment>
<comment type="subunit">
    <text evidence="1">Monomer.</text>
</comment>
<comment type="similarity">
    <text evidence="1">Belongs to the IPP transferase family.</text>
</comment>
<organism>
    <name type="scientific">Brucella melitensis biotype 2 (strain ATCC 23457)</name>
    <dbReference type="NCBI Taxonomy" id="546272"/>
    <lineage>
        <taxon>Bacteria</taxon>
        <taxon>Pseudomonadati</taxon>
        <taxon>Pseudomonadota</taxon>
        <taxon>Alphaproteobacteria</taxon>
        <taxon>Hyphomicrobiales</taxon>
        <taxon>Brucellaceae</taxon>
        <taxon>Brucella/Ochrobactrum group</taxon>
        <taxon>Brucella</taxon>
    </lineage>
</organism>
<gene>
    <name evidence="1" type="primary">miaA</name>
    <name type="ordered locus">BMEA_A1437</name>
</gene>
<protein>
    <recommendedName>
        <fullName evidence="1">tRNA dimethylallyltransferase</fullName>
        <ecNumber evidence="1">2.5.1.75</ecNumber>
    </recommendedName>
    <alternativeName>
        <fullName evidence="1">Dimethylallyl diphosphate:tRNA dimethylallyltransferase</fullName>
        <shortName evidence="1">DMAPP:tRNA dimethylallyltransferase</shortName>
        <shortName evidence="1">DMATase</shortName>
    </alternativeName>
    <alternativeName>
        <fullName evidence="1">Isopentenyl-diphosphate:tRNA isopentenyltransferase</fullName>
        <shortName evidence="1">IPP transferase</shortName>
        <shortName evidence="1">IPPT</shortName>
        <shortName evidence="1">IPTase</shortName>
    </alternativeName>
</protein>
<accession>C0RE30</accession>
<feature type="chain" id="PRO_1000124164" description="tRNA dimethylallyltransferase">
    <location>
        <begin position="1"/>
        <end position="310"/>
    </location>
</feature>
<feature type="region of interest" description="Interaction with substrate tRNA" evidence="1">
    <location>
        <begin position="39"/>
        <end position="42"/>
    </location>
</feature>
<feature type="region of interest" description="Interaction with substrate tRNA" evidence="1">
    <location>
        <begin position="163"/>
        <end position="167"/>
    </location>
</feature>
<feature type="binding site" evidence="1">
    <location>
        <begin position="14"/>
        <end position="21"/>
    </location>
    <ligand>
        <name>ATP</name>
        <dbReference type="ChEBI" id="CHEBI:30616"/>
    </ligand>
</feature>
<feature type="binding site" evidence="1">
    <location>
        <begin position="16"/>
        <end position="21"/>
    </location>
    <ligand>
        <name>substrate</name>
    </ligand>
</feature>
<feature type="site" description="Interaction with substrate tRNA" evidence="1">
    <location>
        <position position="105"/>
    </location>
</feature>
<feature type="site" description="Interaction with substrate tRNA" evidence="1">
    <location>
        <position position="127"/>
    </location>
</feature>
<reference key="1">
    <citation type="submission" date="2009-03" db="EMBL/GenBank/DDBJ databases">
        <title>Brucella melitensis ATCC 23457 whole genome shotgun sequencing project.</title>
        <authorList>
            <person name="Setubal J.C."/>
            <person name="Boyle S."/>
            <person name="Crasta O.R."/>
            <person name="Gillespie J.J."/>
            <person name="Kenyon R.W."/>
            <person name="Lu J."/>
            <person name="Mane S."/>
            <person name="Nagrani S."/>
            <person name="Shallom J.M."/>
            <person name="Shallom S."/>
            <person name="Shukla M."/>
            <person name="Snyder E.E."/>
            <person name="Sobral B.W."/>
            <person name="Wattam A.R."/>
            <person name="Will R."/>
            <person name="Williams K."/>
            <person name="Yoo H."/>
            <person name="Munk C."/>
            <person name="Tapia R."/>
            <person name="Han C."/>
            <person name="Detter J.C."/>
            <person name="Bruce D."/>
            <person name="Brettin T.S."/>
        </authorList>
    </citation>
    <scope>NUCLEOTIDE SEQUENCE [LARGE SCALE GENOMIC DNA]</scope>
    <source>
        <strain>ATCC 23457</strain>
    </source>
</reference>
<evidence type="ECO:0000255" key="1">
    <source>
        <dbReference type="HAMAP-Rule" id="MF_00185"/>
    </source>
</evidence>